<feature type="chain" id="PRO_0000274025" description="Peptidase T">
    <location>
        <begin position="1"/>
        <end position="407"/>
    </location>
</feature>
<feature type="active site" evidence="1">
    <location>
        <position position="84"/>
    </location>
</feature>
<feature type="active site" description="Proton acceptor" evidence="1">
    <location>
        <position position="177"/>
    </location>
</feature>
<feature type="binding site" evidence="1">
    <location>
        <position position="82"/>
    </location>
    <ligand>
        <name>Zn(2+)</name>
        <dbReference type="ChEBI" id="CHEBI:29105"/>
        <label>1</label>
    </ligand>
</feature>
<feature type="binding site" evidence="1">
    <location>
        <position position="143"/>
    </location>
    <ligand>
        <name>Zn(2+)</name>
        <dbReference type="ChEBI" id="CHEBI:29105"/>
        <label>1</label>
    </ligand>
</feature>
<feature type="binding site" evidence="1">
    <location>
        <position position="143"/>
    </location>
    <ligand>
        <name>Zn(2+)</name>
        <dbReference type="ChEBI" id="CHEBI:29105"/>
        <label>2</label>
    </ligand>
</feature>
<feature type="binding site" evidence="1">
    <location>
        <position position="178"/>
    </location>
    <ligand>
        <name>Zn(2+)</name>
        <dbReference type="ChEBI" id="CHEBI:29105"/>
        <label>2</label>
    </ligand>
</feature>
<feature type="binding site" evidence="1">
    <location>
        <position position="200"/>
    </location>
    <ligand>
        <name>Zn(2+)</name>
        <dbReference type="ChEBI" id="CHEBI:29105"/>
        <label>1</label>
    </ligand>
</feature>
<feature type="binding site" evidence="1">
    <location>
        <position position="382"/>
    </location>
    <ligand>
        <name>Zn(2+)</name>
        <dbReference type="ChEBI" id="CHEBI:29105"/>
        <label>2</label>
    </ligand>
</feature>
<name>PEPT_STRPC</name>
<accession>Q1JMF5</accession>
<keyword id="KW-0031">Aminopeptidase</keyword>
<keyword id="KW-0963">Cytoplasm</keyword>
<keyword id="KW-0378">Hydrolase</keyword>
<keyword id="KW-0479">Metal-binding</keyword>
<keyword id="KW-0482">Metalloprotease</keyword>
<keyword id="KW-0645">Protease</keyword>
<keyword id="KW-0862">Zinc</keyword>
<organism>
    <name type="scientific">Streptococcus pyogenes serotype M12 (strain MGAS9429)</name>
    <dbReference type="NCBI Taxonomy" id="370551"/>
    <lineage>
        <taxon>Bacteria</taxon>
        <taxon>Bacillati</taxon>
        <taxon>Bacillota</taxon>
        <taxon>Bacilli</taxon>
        <taxon>Lactobacillales</taxon>
        <taxon>Streptococcaceae</taxon>
        <taxon>Streptococcus</taxon>
    </lineage>
</organism>
<dbReference type="EC" id="3.4.11.4" evidence="1"/>
<dbReference type="EMBL" id="CP000259">
    <property type="protein sequence ID" value="ABF31857.1"/>
    <property type="status" value="ALT_INIT"/>
    <property type="molecule type" value="Genomic_DNA"/>
</dbReference>
<dbReference type="RefSeq" id="WP_002985162.1">
    <property type="nucleotide sequence ID" value="NC_008021.1"/>
</dbReference>
<dbReference type="SMR" id="Q1JMF5"/>
<dbReference type="MEROPS" id="M20.003"/>
<dbReference type="KEGG" id="spk:MGAS9429_Spy0669"/>
<dbReference type="HOGENOM" id="CLU_053676_0_0_9"/>
<dbReference type="Proteomes" id="UP000002433">
    <property type="component" value="Chromosome"/>
</dbReference>
<dbReference type="GO" id="GO:0005829">
    <property type="term" value="C:cytosol"/>
    <property type="evidence" value="ECO:0007669"/>
    <property type="project" value="TreeGrafter"/>
</dbReference>
<dbReference type="GO" id="GO:0008237">
    <property type="term" value="F:metallopeptidase activity"/>
    <property type="evidence" value="ECO:0007669"/>
    <property type="project" value="UniProtKB-KW"/>
</dbReference>
<dbReference type="GO" id="GO:0045148">
    <property type="term" value="F:tripeptide aminopeptidase activity"/>
    <property type="evidence" value="ECO:0007669"/>
    <property type="project" value="UniProtKB-UniRule"/>
</dbReference>
<dbReference type="GO" id="GO:0008270">
    <property type="term" value="F:zinc ion binding"/>
    <property type="evidence" value="ECO:0007669"/>
    <property type="project" value="UniProtKB-UniRule"/>
</dbReference>
<dbReference type="GO" id="GO:0043171">
    <property type="term" value="P:peptide catabolic process"/>
    <property type="evidence" value="ECO:0007669"/>
    <property type="project" value="UniProtKB-UniRule"/>
</dbReference>
<dbReference type="GO" id="GO:0006508">
    <property type="term" value="P:proteolysis"/>
    <property type="evidence" value="ECO:0007669"/>
    <property type="project" value="UniProtKB-UniRule"/>
</dbReference>
<dbReference type="CDD" id="cd03892">
    <property type="entry name" value="M20_peptT"/>
    <property type="match status" value="1"/>
</dbReference>
<dbReference type="FunFam" id="3.30.70.360:FF:000002">
    <property type="entry name" value="Peptidase T"/>
    <property type="match status" value="1"/>
</dbReference>
<dbReference type="Gene3D" id="3.30.70.360">
    <property type="match status" value="1"/>
</dbReference>
<dbReference type="Gene3D" id="3.40.630.10">
    <property type="entry name" value="Zn peptidases"/>
    <property type="match status" value="1"/>
</dbReference>
<dbReference type="HAMAP" id="MF_00550">
    <property type="entry name" value="Aminopeptidase_M20"/>
    <property type="match status" value="1"/>
</dbReference>
<dbReference type="InterPro" id="IPR001261">
    <property type="entry name" value="ArgE/DapE_CS"/>
</dbReference>
<dbReference type="InterPro" id="IPR036264">
    <property type="entry name" value="Bact_exopeptidase_dim_dom"/>
</dbReference>
<dbReference type="InterPro" id="IPR002933">
    <property type="entry name" value="Peptidase_M20"/>
</dbReference>
<dbReference type="InterPro" id="IPR011650">
    <property type="entry name" value="Peptidase_M20_dimer"/>
</dbReference>
<dbReference type="InterPro" id="IPR010161">
    <property type="entry name" value="Peptidase_M20B"/>
</dbReference>
<dbReference type="NCBIfam" id="TIGR01882">
    <property type="entry name" value="peptidase-T"/>
    <property type="match status" value="1"/>
</dbReference>
<dbReference type="NCBIfam" id="NF003976">
    <property type="entry name" value="PRK05469.1"/>
    <property type="match status" value="1"/>
</dbReference>
<dbReference type="NCBIfam" id="NF009920">
    <property type="entry name" value="PRK13381.1"/>
    <property type="match status" value="1"/>
</dbReference>
<dbReference type="PANTHER" id="PTHR42994">
    <property type="entry name" value="PEPTIDASE T"/>
    <property type="match status" value="1"/>
</dbReference>
<dbReference type="PANTHER" id="PTHR42994:SF1">
    <property type="entry name" value="PEPTIDASE T"/>
    <property type="match status" value="1"/>
</dbReference>
<dbReference type="Pfam" id="PF07687">
    <property type="entry name" value="M20_dimer"/>
    <property type="match status" value="1"/>
</dbReference>
<dbReference type="Pfam" id="PF01546">
    <property type="entry name" value="Peptidase_M20"/>
    <property type="match status" value="1"/>
</dbReference>
<dbReference type="PIRSF" id="PIRSF037215">
    <property type="entry name" value="Peptidase_M20B"/>
    <property type="match status" value="1"/>
</dbReference>
<dbReference type="SUPFAM" id="SSF55031">
    <property type="entry name" value="Bacterial exopeptidase dimerisation domain"/>
    <property type="match status" value="1"/>
</dbReference>
<dbReference type="SUPFAM" id="SSF53187">
    <property type="entry name" value="Zn-dependent exopeptidases"/>
    <property type="match status" value="1"/>
</dbReference>
<dbReference type="PROSITE" id="PS00758">
    <property type="entry name" value="ARGE_DAPE_CPG2_1"/>
    <property type="match status" value="1"/>
</dbReference>
<dbReference type="PROSITE" id="PS00759">
    <property type="entry name" value="ARGE_DAPE_CPG2_2"/>
    <property type="match status" value="1"/>
</dbReference>
<protein>
    <recommendedName>
        <fullName evidence="1">Peptidase T</fullName>
        <ecNumber evidence="1">3.4.11.4</ecNumber>
    </recommendedName>
    <alternativeName>
        <fullName evidence="1">Aminotripeptidase</fullName>
        <shortName evidence="1">Tripeptidase</shortName>
    </alternativeName>
    <alternativeName>
        <fullName evidence="1">Tripeptide aminopeptidase</fullName>
    </alternativeName>
</protein>
<proteinExistence type="inferred from homology"/>
<sequence length="407" mass="45008">MKYDNLLDRFIKYVKVNTRSDPDSETTPSTESQEAFALTILKPEMEAIGLQDVHYNPVNGYLIGTLPANNPTLTRKIGFIAHMDTADFNAENVNPQIIDNYQGGDITLGSSNYKLDPKAFPNLNNYIGQTLITTDGTTLLGADDKSGIAEIMTAIEFLTSQPQIEHCDIKVAFGPDEEIGVGADKFEVADFEVDFAYTMDGGPLGELQYETFSAAALEVTFLGRNVHPGTAKDQMINALELAIDFHEKLPAKERPEYTDGYQGFYHLTGLTGTVEEARASYIIRDFEEASFEARKVKVENIAQSMNAHLGTKRVLVELNDQYYNMKKVIEKDMTAIELAKEVMEELAIKPVIEPIRGGTDGSKISFMGIPTPNIFAGGENMHGRFEFVSLQTMERAVDVIIGLVCKA</sequence>
<comment type="function">
    <text evidence="1">Cleaves the N-terminal amino acid of tripeptides.</text>
</comment>
<comment type="catalytic activity">
    <reaction evidence="1">
        <text>Release of the N-terminal residue from a tripeptide.</text>
        <dbReference type="EC" id="3.4.11.4"/>
    </reaction>
</comment>
<comment type="cofactor">
    <cofactor evidence="1">
        <name>Zn(2+)</name>
        <dbReference type="ChEBI" id="CHEBI:29105"/>
    </cofactor>
    <text evidence="1">Binds 2 Zn(2+) ions per subunit.</text>
</comment>
<comment type="subcellular location">
    <subcellularLocation>
        <location evidence="1">Cytoplasm</location>
    </subcellularLocation>
</comment>
<comment type="similarity">
    <text evidence="1">Belongs to the peptidase M20B family.</text>
</comment>
<comment type="sequence caution" evidence="2">
    <conflict type="erroneous initiation">
        <sequence resource="EMBL-CDS" id="ABF31857"/>
    </conflict>
</comment>
<reference key="1">
    <citation type="journal article" date="2006" name="Proc. Natl. Acad. Sci. U.S.A.">
        <title>Molecular genetic anatomy of inter- and intraserotype variation in the human bacterial pathogen group A Streptococcus.</title>
        <authorList>
            <person name="Beres S.B."/>
            <person name="Richter E.W."/>
            <person name="Nagiec M.J."/>
            <person name="Sumby P."/>
            <person name="Porcella S.F."/>
            <person name="DeLeo F.R."/>
            <person name="Musser J.M."/>
        </authorList>
    </citation>
    <scope>NUCLEOTIDE SEQUENCE [LARGE SCALE GENOMIC DNA]</scope>
    <source>
        <strain>MGAS9429</strain>
    </source>
</reference>
<gene>
    <name evidence="1" type="primary">pepT</name>
    <name type="ordered locus">MGAS9429_Spy0669</name>
</gene>
<evidence type="ECO:0000255" key="1">
    <source>
        <dbReference type="HAMAP-Rule" id="MF_00550"/>
    </source>
</evidence>
<evidence type="ECO:0000305" key="2"/>